<protein>
    <recommendedName>
        <fullName evidence="1">Elongation factor G</fullName>
        <shortName evidence="1">EF-G</shortName>
    </recommendedName>
</protein>
<dbReference type="EMBL" id="CP000359">
    <property type="protein sequence ID" value="ABF46166.1"/>
    <property type="molecule type" value="Genomic_DNA"/>
</dbReference>
<dbReference type="RefSeq" id="WP_011530994.1">
    <property type="nucleotide sequence ID" value="NC_008025.1"/>
</dbReference>
<dbReference type="SMR" id="Q1IX68"/>
<dbReference type="STRING" id="319795.Dgeo_1871"/>
<dbReference type="KEGG" id="dge:Dgeo_1871"/>
<dbReference type="eggNOG" id="COG0480">
    <property type="taxonomic scope" value="Bacteria"/>
</dbReference>
<dbReference type="HOGENOM" id="CLU_002794_4_1_0"/>
<dbReference type="Proteomes" id="UP000002431">
    <property type="component" value="Chromosome"/>
</dbReference>
<dbReference type="GO" id="GO:0005737">
    <property type="term" value="C:cytoplasm"/>
    <property type="evidence" value="ECO:0007669"/>
    <property type="project" value="UniProtKB-SubCell"/>
</dbReference>
<dbReference type="GO" id="GO:0005525">
    <property type="term" value="F:GTP binding"/>
    <property type="evidence" value="ECO:0007669"/>
    <property type="project" value="UniProtKB-UniRule"/>
</dbReference>
<dbReference type="GO" id="GO:0003924">
    <property type="term" value="F:GTPase activity"/>
    <property type="evidence" value="ECO:0007669"/>
    <property type="project" value="InterPro"/>
</dbReference>
<dbReference type="GO" id="GO:0003746">
    <property type="term" value="F:translation elongation factor activity"/>
    <property type="evidence" value="ECO:0007669"/>
    <property type="project" value="UniProtKB-UniRule"/>
</dbReference>
<dbReference type="GO" id="GO:0032790">
    <property type="term" value="P:ribosome disassembly"/>
    <property type="evidence" value="ECO:0007669"/>
    <property type="project" value="TreeGrafter"/>
</dbReference>
<dbReference type="CDD" id="cd01886">
    <property type="entry name" value="EF-G"/>
    <property type="match status" value="1"/>
</dbReference>
<dbReference type="CDD" id="cd16262">
    <property type="entry name" value="EFG_III"/>
    <property type="match status" value="1"/>
</dbReference>
<dbReference type="CDD" id="cd01434">
    <property type="entry name" value="EFG_mtEFG1_IV"/>
    <property type="match status" value="1"/>
</dbReference>
<dbReference type="CDD" id="cd03713">
    <property type="entry name" value="EFG_mtEFG_C"/>
    <property type="match status" value="1"/>
</dbReference>
<dbReference type="CDD" id="cd04088">
    <property type="entry name" value="EFG_mtEFG_II"/>
    <property type="match status" value="1"/>
</dbReference>
<dbReference type="FunFam" id="2.40.30.10:FF:000006">
    <property type="entry name" value="Elongation factor G"/>
    <property type="match status" value="1"/>
</dbReference>
<dbReference type="FunFam" id="3.30.230.10:FF:000003">
    <property type="entry name" value="Elongation factor G"/>
    <property type="match status" value="1"/>
</dbReference>
<dbReference type="FunFam" id="3.30.70.240:FF:000001">
    <property type="entry name" value="Elongation factor G"/>
    <property type="match status" value="1"/>
</dbReference>
<dbReference type="FunFam" id="3.30.70.870:FF:000001">
    <property type="entry name" value="Elongation factor G"/>
    <property type="match status" value="1"/>
</dbReference>
<dbReference type="FunFam" id="3.40.50.300:FF:000029">
    <property type="entry name" value="Elongation factor G"/>
    <property type="match status" value="1"/>
</dbReference>
<dbReference type="Gene3D" id="3.30.230.10">
    <property type="match status" value="1"/>
</dbReference>
<dbReference type="Gene3D" id="3.30.70.240">
    <property type="match status" value="1"/>
</dbReference>
<dbReference type="Gene3D" id="3.30.70.870">
    <property type="entry name" value="Elongation Factor G (Translational Gtpase), domain 3"/>
    <property type="match status" value="1"/>
</dbReference>
<dbReference type="Gene3D" id="3.40.50.300">
    <property type="entry name" value="P-loop containing nucleotide triphosphate hydrolases"/>
    <property type="match status" value="1"/>
</dbReference>
<dbReference type="Gene3D" id="2.40.30.10">
    <property type="entry name" value="Translation factors"/>
    <property type="match status" value="1"/>
</dbReference>
<dbReference type="HAMAP" id="MF_00054_B">
    <property type="entry name" value="EF_G_EF_2_B"/>
    <property type="match status" value="1"/>
</dbReference>
<dbReference type="InterPro" id="IPR041095">
    <property type="entry name" value="EFG_II"/>
</dbReference>
<dbReference type="InterPro" id="IPR009022">
    <property type="entry name" value="EFG_III"/>
</dbReference>
<dbReference type="InterPro" id="IPR035647">
    <property type="entry name" value="EFG_III/V"/>
</dbReference>
<dbReference type="InterPro" id="IPR047872">
    <property type="entry name" value="EFG_IV"/>
</dbReference>
<dbReference type="InterPro" id="IPR035649">
    <property type="entry name" value="EFG_V"/>
</dbReference>
<dbReference type="InterPro" id="IPR000640">
    <property type="entry name" value="EFG_V-like"/>
</dbReference>
<dbReference type="InterPro" id="IPR004161">
    <property type="entry name" value="EFTu-like_2"/>
</dbReference>
<dbReference type="InterPro" id="IPR031157">
    <property type="entry name" value="G_TR_CS"/>
</dbReference>
<dbReference type="InterPro" id="IPR027417">
    <property type="entry name" value="P-loop_NTPase"/>
</dbReference>
<dbReference type="InterPro" id="IPR020568">
    <property type="entry name" value="Ribosomal_Su5_D2-typ_SF"/>
</dbReference>
<dbReference type="InterPro" id="IPR014721">
    <property type="entry name" value="Ribsml_uS5_D2-typ_fold_subgr"/>
</dbReference>
<dbReference type="InterPro" id="IPR005225">
    <property type="entry name" value="Small_GTP-bd"/>
</dbReference>
<dbReference type="InterPro" id="IPR000795">
    <property type="entry name" value="T_Tr_GTP-bd_dom"/>
</dbReference>
<dbReference type="InterPro" id="IPR009000">
    <property type="entry name" value="Transl_B-barrel_sf"/>
</dbReference>
<dbReference type="InterPro" id="IPR004540">
    <property type="entry name" value="Transl_elong_EFG/EF2"/>
</dbReference>
<dbReference type="InterPro" id="IPR005517">
    <property type="entry name" value="Transl_elong_EFG/EF2_IV"/>
</dbReference>
<dbReference type="NCBIfam" id="TIGR00484">
    <property type="entry name" value="EF-G"/>
    <property type="match status" value="1"/>
</dbReference>
<dbReference type="NCBIfam" id="NF009379">
    <property type="entry name" value="PRK12740.1-3"/>
    <property type="match status" value="1"/>
</dbReference>
<dbReference type="NCBIfam" id="NF009381">
    <property type="entry name" value="PRK12740.1-5"/>
    <property type="match status" value="1"/>
</dbReference>
<dbReference type="NCBIfam" id="TIGR00231">
    <property type="entry name" value="small_GTP"/>
    <property type="match status" value="1"/>
</dbReference>
<dbReference type="PANTHER" id="PTHR43261:SF1">
    <property type="entry name" value="RIBOSOME-RELEASING FACTOR 2, MITOCHONDRIAL"/>
    <property type="match status" value="1"/>
</dbReference>
<dbReference type="PANTHER" id="PTHR43261">
    <property type="entry name" value="TRANSLATION ELONGATION FACTOR G-RELATED"/>
    <property type="match status" value="1"/>
</dbReference>
<dbReference type="Pfam" id="PF00679">
    <property type="entry name" value="EFG_C"/>
    <property type="match status" value="1"/>
</dbReference>
<dbReference type="Pfam" id="PF14492">
    <property type="entry name" value="EFG_III"/>
    <property type="match status" value="1"/>
</dbReference>
<dbReference type="Pfam" id="PF03764">
    <property type="entry name" value="EFG_IV"/>
    <property type="match status" value="1"/>
</dbReference>
<dbReference type="Pfam" id="PF00009">
    <property type="entry name" value="GTP_EFTU"/>
    <property type="match status" value="1"/>
</dbReference>
<dbReference type="Pfam" id="PF03144">
    <property type="entry name" value="GTP_EFTU_D2"/>
    <property type="match status" value="1"/>
</dbReference>
<dbReference type="PRINTS" id="PR00315">
    <property type="entry name" value="ELONGATNFCT"/>
</dbReference>
<dbReference type="SMART" id="SM00838">
    <property type="entry name" value="EFG_C"/>
    <property type="match status" value="1"/>
</dbReference>
<dbReference type="SMART" id="SM00889">
    <property type="entry name" value="EFG_IV"/>
    <property type="match status" value="1"/>
</dbReference>
<dbReference type="SUPFAM" id="SSF54980">
    <property type="entry name" value="EF-G C-terminal domain-like"/>
    <property type="match status" value="2"/>
</dbReference>
<dbReference type="SUPFAM" id="SSF52540">
    <property type="entry name" value="P-loop containing nucleoside triphosphate hydrolases"/>
    <property type="match status" value="1"/>
</dbReference>
<dbReference type="SUPFAM" id="SSF54211">
    <property type="entry name" value="Ribosomal protein S5 domain 2-like"/>
    <property type="match status" value="1"/>
</dbReference>
<dbReference type="SUPFAM" id="SSF50447">
    <property type="entry name" value="Translation proteins"/>
    <property type="match status" value="1"/>
</dbReference>
<dbReference type="PROSITE" id="PS00301">
    <property type="entry name" value="G_TR_1"/>
    <property type="match status" value="1"/>
</dbReference>
<dbReference type="PROSITE" id="PS51722">
    <property type="entry name" value="G_TR_2"/>
    <property type="match status" value="1"/>
</dbReference>
<evidence type="ECO:0000255" key="1">
    <source>
        <dbReference type="HAMAP-Rule" id="MF_00054"/>
    </source>
</evidence>
<reference key="1">
    <citation type="submission" date="2006-04" db="EMBL/GenBank/DDBJ databases">
        <title>Complete sequence of chromosome of Deinococcus geothermalis DSM 11300.</title>
        <authorList>
            <person name="Copeland A."/>
            <person name="Lucas S."/>
            <person name="Lapidus A."/>
            <person name="Barry K."/>
            <person name="Detter J.C."/>
            <person name="Glavina del Rio T."/>
            <person name="Hammon N."/>
            <person name="Israni S."/>
            <person name="Dalin E."/>
            <person name="Tice H."/>
            <person name="Pitluck S."/>
            <person name="Brettin T."/>
            <person name="Bruce D."/>
            <person name="Han C."/>
            <person name="Tapia R."/>
            <person name="Saunders E."/>
            <person name="Gilna P."/>
            <person name="Schmutz J."/>
            <person name="Larimer F."/>
            <person name="Land M."/>
            <person name="Hauser L."/>
            <person name="Kyrpides N."/>
            <person name="Kim E."/>
            <person name="Daly M.J."/>
            <person name="Fredrickson J.K."/>
            <person name="Makarova K.S."/>
            <person name="Gaidamakova E.K."/>
            <person name="Zhai M."/>
            <person name="Richardson P."/>
        </authorList>
    </citation>
    <scope>NUCLEOTIDE SEQUENCE [LARGE SCALE GENOMIC DNA]</scope>
    <source>
        <strain>DSM 11300 / CIP 105573 / AG-3a</strain>
    </source>
</reference>
<comment type="function">
    <text evidence="1">Catalyzes the GTP-dependent ribosomal translocation step during translation elongation. During this step, the ribosome changes from the pre-translocational (PRE) to the post-translocational (POST) state as the newly formed A-site-bound peptidyl-tRNA and P-site-bound deacylated tRNA move to the P and E sites, respectively. Catalyzes the coordinated movement of the two tRNA molecules, the mRNA and conformational changes in the ribosome.</text>
</comment>
<comment type="subcellular location">
    <subcellularLocation>
        <location evidence="1">Cytoplasm</location>
    </subcellularLocation>
</comment>
<comment type="similarity">
    <text evidence="1">Belongs to the TRAFAC class translation factor GTPase superfamily. Classic translation factor GTPase family. EF-G/EF-2 subfamily.</text>
</comment>
<name>EFG_DEIGD</name>
<accession>Q1IX68</accession>
<keyword id="KW-0963">Cytoplasm</keyword>
<keyword id="KW-0251">Elongation factor</keyword>
<keyword id="KW-0342">GTP-binding</keyword>
<keyword id="KW-0547">Nucleotide-binding</keyword>
<keyword id="KW-0648">Protein biosynthesis</keyword>
<organism>
    <name type="scientific">Deinococcus geothermalis (strain DSM 11300 / CIP 105573 / AG-3a)</name>
    <dbReference type="NCBI Taxonomy" id="319795"/>
    <lineage>
        <taxon>Bacteria</taxon>
        <taxon>Thermotogati</taxon>
        <taxon>Deinococcota</taxon>
        <taxon>Deinococci</taxon>
        <taxon>Deinococcales</taxon>
        <taxon>Deinococcaceae</taxon>
        <taxon>Deinococcus</taxon>
    </lineage>
</organism>
<proteinExistence type="inferred from homology"/>
<sequence>MTTKAQSYLTHFRNIGIAAHIDAGKTTTTERILYYTGRTHNIGEVHDGAATMDWMEQERERGITITAAATTAKWKRSGTNEEYTINIIDTPGHVDFTIEVERSMRVLDGAVAVFDSSQGVEPQSETVWRQADRYGVPRIAFANKMDKTGASFELVVNDIRERLGAIPAPIQYPMGQENEFKGIIDLVRQRAYTYTNDLGTEIQEHDVPAEYADKVAEMRAQLIEAAAEVDEDLMMMYLEGEEPSVEQLVAALRKGTIDKKIFPVLCGSSLKNKGVQLLLDAVVDYLPSPLDIPAIKGTTENGEVIEYPADPEGKLAALAFKIMADPYVGRLTFVRIYSGTLQAGSYVYNASKDKRERVGRLLKMHANSREEVTELKAGELGAVIGLKDAGTGNTLIGDGDTRVLLESIDVPEPVIKLAIEPKTKADQEKMGIGLQKLAEEDPTFKVETDQESGQTTISGMGELHLEILVDRLKREYKVDANVGAPQVAYRETITKPVDVEGKFVRQSGGRGQFGHVKIKAEPLEPGAGFVFENAVVGGTVPKEYIGPAQKGIEEAMQSGPMLGFPVVDMKVTLYDGSYHEVDSSEMAFKIAGSMALKEAVQKGAPALLEPIMRVEVTVPEEYMGDIIGDLNSRRGQIQGMEARGNAQIVKAFVPLSEMFGYATDMRSMTQGRASYSMFFDHYSQVPNNLAQQLMKK</sequence>
<feature type="chain" id="PRO_0000263445" description="Elongation factor G">
    <location>
        <begin position="1"/>
        <end position="696"/>
    </location>
</feature>
<feature type="domain" description="tr-type G">
    <location>
        <begin position="10"/>
        <end position="290"/>
    </location>
</feature>
<feature type="binding site" evidence="1">
    <location>
        <begin position="19"/>
        <end position="26"/>
    </location>
    <ligand>
        <name>GTP</name>
        <dbReference type="ChEBI" id="CHEBI:37565"/>
    </ligand>
</feature>
<feature type="binding site" evidence="1">
    <location>
        <begin position="89"/>
        <end position="93"/>
    </location>
    <ligand>
        <name>GTP</name>
        <dbReference type="ChEBI" id="CHEBI:37565"/>
    </ligand>
</feature>
<feature type="binding site" evidence="1">
    <location>
        <begin position="143"/>
        <end position="146"/>
    </location>
    <ligand>
        <name>GTP</name>
        <dbReference type="ChEBI" id="CHEBI:37565"/>
    </ligand>
</feature>
<gene>
    <name evidence="1" type="primary">fusA</name>
    <name type="ordered locus">Dgeo_1871</name>
</gene>